<comment type="catalytic activity">
    <reaction evidence="1">
        <text>beta-nicotinamide D-ribonucleotide + ATP + H(+) = diphosphate + NAD(+)</text>
        <dbReference type="Rhea" id="RHEA:21360"/>
        <dbReference type="ChEBI" id="CHEBI:14649"/>
        <dbReference type="ChEBI" id="CHEBI:15378"/>
        <dbReference type="ChEBI" id="CHEBI:30616"/>
        <dbReference type="ChEBI" id="CHEBI:33019"/>
        <dbReference type="ChEBI" id="CHEBI:57540"/>
        <dbReference type="EC" id="2.7.7.1"/>
    </reaction>
</comment>
<comment type="pathway">
    <text evidence="1">Cofactor biosynthesis; NAD(+) biosynthesis; NAD(+) from nicotinamide D-ribonucleotide: step 1/1.</text>
</comment>
<comment type="subcellular location">
    <subcellularLocation>
        <location evidence="1">Cytoplasm</location>
    </subcellularLocation>
</comment>
<comment type="similarity">
    <text evidence="1">Belongs to the archaeal NMN adenylyltransferase family.</text>
</comment>
<proteinExistence type="inferred from homology"/>
<accession>B8GDZ6</accession>
<dbReference type="EC" id="2.7.7.1" evidence="1"/>
<dbReference type="EMBL" id="CP001338">
    <property type="protein sequence ID" value="ACL17497.1"/>
    <property type="molecule type" value="Genomic_DNA"/>
</dbReference>
<dbReference type="RefSeq" id="WP_012618816.1">
    <property type="nucleotide sequence ID" value="NC_011832.1"/>
</dbReference>
<dbReference type="SMR" id="B8GDZ6"/>
<dbReference type="STRING" id="521011.Mpal_2201"/>
<dbReference type="GeneID" id="7270286"/>
<dbReference type="KEGG" id="mpl:Mpal_2201"/>
<dbReference type="eggNOG" id="arCOG00972">
    <property type="taxonomic scope" value="Archaea"/>
</dbReference>
<dbReference type="HOGENOM" id="CLU_108783_0_0_2"/>
<dbReference type="OrthoDB" id="264480at2157"/>
<dbReference type="UniPathway" id="UPA00253">
    <property type="reaction ID" value="UER00600"/>
</dbReference>
<dbReference type="Proteomes" id="UP000002457">
    <property type="component" value="Chromosome"/>
</dbReference>
<dbReference type="GO" id="GO:0005737">
    <property type="term" value="C:cytoplasm"/>
    <property type="evidence" value="ECO:0007669"/>
    <property type="project" value="UniProtKB-SubCell"/>
</dbReference>
<dbReference type="GO" id="GO:0005524">
    <property type="term" value="F:ATP binding"/>
    <property type="evidence" value="ECO:0007669"/>
    <property type="project" value="UniProtKB-KW"/>
</dbReference>
<dbReference type="GO" id="GO:0000309">
    <property type="term" value="F:nicotinamide-nucleotide adenylyltransferase activity"/>
    <property type="evidence" value="ECO:0007669"/>
    <property type="project" value="UniProtKB-UniRule"/>
</dbReference>
<dbReference type="GO" id="GO:0009435">
    <property type="term" value="P:NAD biosynthetic process"/>
    <property type="evidence" value="ECO:0007669"/>
    <property type="project" value="UniProtKB-UniRule"/>
</dbReference>
<dbReference type="CDD" id="cd02166">
    <property type="entry name" value="NMNAT_Archaea"/>
    <property type="match status" value="1"/>
</dbReference>
<dbReference type="Gene3D" id="3.40.50.620">
    <property type="entry name" value="HUPs"/>
    <property type="match status" value="1"/>
</dbReference>
<dbReference type="HAMAP" id="MF_00243">
    <property type="entry name" value="NMN_adenylyltr"/>
    <property type="match status" value="1"/>
</dbReference>
<dbReference type="InterPro" id="IPR004821">
    <property type="entry name" value="Cyt_trans-like"/>
</dbReference>
<dbReference type="InterPro" id="IPR006418">
    <property type="entry name" value="NMN_Atrans_arc"/>
</dbReference>
<dbReference type="InterPro" id="IPR014729">
    <property type="entry name" value="Rossmann-like_a/b/a_fold"/>
</dbReference>
<dbReference type="NCBIfam" id="TIGR01527">
    <property type="entry name" value="arch_NMN_Atrans"/>
    <property type="match status" value="1"/>
</dbReference>
<dbReference type="NCBIfam" id="TIGR00125">
    <property type="entry name" value="cyt_tran_rel"/>
    <property type="match status" value="1"/>
</dbReference>
<dbReference type="NCBIfam" id="NF002243">
    <property type="entry name" value="PRK01153.1"/>
    <property type="match status" value="1"/>
</dbReference>
<dbReference type="PANTHER" id="PTHR21342:SF0">
    <property type="entry name" value="BIFUNCTIONAL NMN ADENYLYLTRANSFERASE_NUDIX HYDROLASE"/>
    <property type="match status" value="1"/>
</dbReference>
<dbReference type="PANTHER" id="PTHR21342">
    <property type="entry name" value="PHOSPHOPANTETHEINE ADENYLYLTRANSFERASE"/>
    <property type="match status" value="1"/>
</dbReference>
<dbReference type="Pfam" id="PF01467">
    <property type="entry name" value="CTP_transf_like"/>
    <property type="match status" value="1"/>
</dbReference>
<dbReference type="SUPFAM" id="SSF52374">
    <property type="entry name" value="Nucleotidylyl transferase"/>
    <property type="match status" value="1"/>
</dbReference>
<reference key="1">
    <citation type="journal article" date="2015" name="Genome Announc.">
        <title>Complete Genome Sequence of Methanosphaerula palustris E1-9CT, a Hydrogenotrophic Methanogen Isolated from a Minerotrophic Fen Peatland.</title>
        <authorList>
            <person name="Cadillo-Quiroz H."/>
            <person name="Browne P."/>
            <person name="Kyrpides N."/>
            <person name="Woyke T."/>
            <person name="Goodwin L."/>
            <person name="Detter C."/>
            <person name="Yavitt J.B."/>
            <person name="Zinder S.H."/>
        </authorList>
    </citation>
    <scope>NUCLEOTIDE SEQUENCE [LARGE SCALE GENOMIC DNA]</scope>
    <source>
        <strain>ATCC BAA-1556 / DSM 19958 / E1-9c</strain>
    </source>
</reference>
<keyword id="KW-0067">ATP-binding</keyword>
<keyword id="KW-0963">Cytoplasm</keyword>
<keyword id="KW-0520">NAD</keyword>
<keyword id="KW-0547">Nucleotide-binding</keyword>
<keyword id="KW-0548">Nucleotidyltransferase</keyword>
<keyword id="KW-0662">Pyridine nucleotide biosynthesis</keyword>
<keyword id="KW-1185">Reference proteome</keyword>
<keyword id="KW-0808">Transferase</keyword>
<evidence type="ECO:0000255" key="1">
    <source>
        <dbReference type="HAMAP-Rule" id="MF_00243"/>
    </source>
</evidence>
<gene>
    <name type="ordered locus">Mpal_2201</name>
</gene>
<feature type="chain" id="PRO_1000125331" description="Nicotinamide-nucleotide adenylyltransferase">
    <location>
        <begin position="1"/>
        <end position="168"/>
    </location>
</feature>
<protein>
    <recommendedName>
        <fullName evidence="1">Nicotinamide-nucleotide adenylyltransferase</fullName>
        <ecNumber evidence="1">2.7.7.1</ecNumber>
    </recommendedName>
    <alternativeName>
        <fullName evidence="1">NAD(+) diphosphorylase</fullName>
    </alternativeName>
    <alternativeName>
        <fullName evidence="1">NAD(+) pyrophosphorylase</fullName>
    </alternativeName>
    <alternativeName>
        <fullName evidence="1">NMN adenylyltransferase</fullName>
    </alternativeName>
</protein>
<name>NADM_METPE</name>
<sequence length="168" mass="18934">MGRAFYIGRFQPYHYGHQSVLKRIAETADEIIIGIGSAQLSHEVNNPFTAGERVLMITRALAHLDCPYYVIPIEDIQRNALWVAHVRSMTPPFDRVYSSNPLVVRLFAEVGISVESPSMYERETHCGTAIRELMLNGEPWEDRVPPAVVSVIREIDGVERLQQIAGSD</sequence>
<organism>
    <name type="scientific">Methanosphaerula palustris (strain ATCC BAA-1556 / DSM 19958 / E1-9c)</name>
    <dbReference type="NCBI Taxonomy" id="521011"/>
    <lineage>
        <taxon>Archaea</taxon>
        <taxon>Methanobacteriati</taxon>
        <taxon>Methanobacteriota</taxon>
        <taxon>Stenosarchaea group</taxon>
        <taxon>Methanomicrobia</taxon>
        <taxon>Methanomicrobiales</taxon>
        <taxon>Methanoregulaceae</taxon>
        <taxon>Methanosphaerula</taxon>
    </lineage>
</organism>